<comment type="function">
    <text evidence="1">Fluoride-specific ion channel. Important for reducing fluoride concentration in the cell, thus reducing its toxicity.</text>
</comment>
<comment type="catalytic activity">
    <reaction evidence="1">
        <text>fluoride(in) = fluoride(out)</text>
        <dbReference type="Rhea" id="RHEA:76159"/>
        <dbReference type="ChEBI" id="CHEBI:17051"/>
    </reaction>
    <physiologicalReaction direction="left-to-right" evidence="1">
        <dbReference type="Rhea" id="RHEA:76160"/>
    </physiologicalReaction>
</comment>
<comment type="activity regulation">
    <text evidence="1">Na(+) is not transported, but it plays an essential structural role and its presence is essential for fluoride channel function.</text>
</comment>
<comment type="subcellular location">
    <subcellularLocation>
        <location evidence="1">Cell inner membrane</location>
        <topology evidence="1">Multi-pass membrane protein</topology>
    </subcellularLocation>
</comment>
<comment type="similarity">
    <text evidence="1">Belongs to the fluoride channel Fluc/FEX (TC 1.A.43) family.</text>
</comment>
<comment type="sequence caution" evidence="2">
    <conflict type="erroneous initiation">
        <sequence resource="EMBL-CDS" id="CAE27135"/>
    </conflict>
</comment>
<name>FLUC_RHOPA</name>
<sequence>MAYLLVFVGGGLGAMFRHFINTLSGRLLGTAFPYHTFFINVTGSIVMGLIAGYLAFKGGSSQHFRLFLMTGILGGYTTFSAFSLDAALLYERGAVGLAVVYVLGSVVLAIAGLFGGMALIRAMT</sequence>
<gene>
    <name evidence="1" type="primary">fluC</name>
    <name evidence="1" type="synonym">crcB</name>
    <name type="ordered locus">RPA1694</name>
</gene>
<reference key="1">
    <citation type="journal article" date="2004" name="Nat. Biotechnol.">
        <title>Complete genome sequence of the metabolically versatile photosynthetic bacterium Rhodopseudomonas palustris.</title>
        <authorList>
            <person name="Larimer F.W."/>
            <person name="Chain P."/>
            <person name="Hauser L."/>
            <person name="Lamerdin J.E."/>
            <person name="Malfatti S."/>
            <person name="Do L."/>
            <person name="Land M.L."/>
            <person name="Pelletier D.A."/>
            <person name="Beatty J.T."/>
            <person name="Lang A.S."/>
            <person name="Tabita F.R."/>
            <person name="Gibson J.L."/>
            <person name="Hanson T.E."/>
            <person name="Bobst C."/>
            <person name="Torres y Torres J.L."/>
            <person name="Peres C."/>
            <person name="Harrison F.H."/>
            <person name="Gibson J."/>
            <person name="Harwood C.S."/>
        </authorList>
    </citation>
    <scope>NUCLEOTIDE SEQUENCE [LARGE SCALE GENOMIC DNA]</scope>
    <source>
        <strain>ATCC BAA-98 / CGA009</strain>
    </source>
</reference>
<accession>P61394</accession>
<proteinExistence type="inferred from homology"/>
<organism>
    <name type="scientific">Rhodopseudomonas palustris (strain ATCC BAA-98 / CGA009)</name>
    <dbReference type="NCBI Taxonomy" id="258594"/>
    <lineage>
        <taxon>Bacteria</taxon>
        <taxon>Pseudomonadati</taxon>
        <taxon>Pseudomonadota</taxon>
        <taxon>Alphaproteobacteria</taxon>
        <taxon>Hyphomicrobiales</taxon>
        <taxon>Nitrobacteraceae</taxon>
        <taxon>Rhodopseudomonas</taxon>
    </lineage>
</organism>
<keyword id="KW-0997">Cell inner membrane</keyword>
<keyword id="KW-1003">Cell membrane</keyword>
<keyword id="KW-0407">Ion channel</keyword>
<keyword id="KW-0406">Ion transport</keyword>
<keyword id="KW-0472">Membrane</keyword>
<keyword id="KW-0479">Metal-binding</keyword>
<keyword id="KW-0915">Sodium</keyword>
<keyword id="KW-0812">Transmembrane</keyword>
<keyword id="KW-1133">Transmembrane helix</keyword>
<keyword id="KW-0813">Transport</keyword>
<feature type="chain" id="PRO_0000110165" description="Fluoride-specific ion channel FluC">
    <location>
        <begin position="1"/>
        <end position="124"/>
    </location>
</feature>
<feature type="transmembrane region" description="Helical" evidence="1">
    <location>
        <begin position="1"/>
        <end position="21"/>
    </location>
</feature>
<feature type="transmembrane region" description="Helical" evidence="1">
    <location>
        <begin position="36"/>
        <end position="56"/>
    </location>
</feature>
<feature type="transmembrane region" description="Helical" evidence="1">
    <location>
        <begin position="66"/>
        <end position="86"/>
    </location>
</feature>
<feature type="transmembrane region" description="Helical" evidence="1">
    <location>
        <begin position="94"/>
        <end position="114"/>
    </location>
</feature>
<feature type="binding site" evidence="1">
    <location>
        <position position="74"/>
    </location>
    <ligand>
        <name>Na(+)</name>
        <dbReference type="ChEBI" id="CHEBI:29101"/>
        <note>structural</note>
    </ligand>
</feature>
<feature type="binding site" evidence="1">
    <location>
        <position position="77"/>
    </location>
    <ligand>
        <name>Na(+)</name>
        <dbReference type="ChEBI" id="CHEBI:29101"/>
        <note>structural</note>
    </ligand>
</feature>
<evidence type="ECO:0000255" key="1">
    <source>
        <dbReference type="HAMAP-Rule" id="MF_00454"/>
    </source>
</evidence>
<evidence type="ECO:0000305" key="2"/>
<dbReference type="EMBL" id="BX572598">
    <property type="protein sequence ID" value="CAE27135.1"/>
    <property type="status" value="ALT_INIT"/>
    <property type="molecule type" value="Genomic_DNA"/>
</dbReference>
<dbReference type="RefSeq" id="WP_012495262.1">
    <property type="nucleotide sequence ID" value="NZ_CP116810.1"/>
</dbReference>
<dbReference type="SMR" id="P61394"/>
<dbReference type="GeneID" id="66892729"/>
<dbReference type="eggNOG" id="COG0239">
    <property type="taxonomic scope" value="Bacteria"/>
</dbReference>
<dbReference type="HOGENOM" id="CLU_114342_3_0_5"/>
<dbReference type="PhylomeDB" id="P61394"/>
<dbReference type="GO" id="GO:0005886">
    <property type="term" value="C:plasma membrane"/>
    <property type="evidence" value="ECO:0007669"/>
    <property type="project" value="UniProtKB-SubCell"/>
</dbReference>
<dbReference type="GO" id="GO:0062054">
    <property type="term" value="F:fluoride channel activity"/>
    <property type="evidence" value="ECO:0007669"/>
    <property type="project" value="UniProtKB-UniRule"/>
</dbReference>
<dbReference type="GO" id="GO:0046872">
    <property type="term" value="F:metal ion binding"/>
    <property type="evidence" value="ECO:0007669"/>
    <property type="project" value="UniProtKB-KW"/>
</dbReference>
<dbReference type="GO" id="GO:0140114">
    <property type="term" value="P:cellular detoxification of fluoride"/>
    <property type="evidence" value="ECO:0007669"/>
    <property type="project" value="UniProtKB-UniRule"/>
</dbReference>
<dbReference type="HAMAP" id="MF_00454">
    <property type="entry name" value="FluC"/>
    <property type="match status" value="1"/>
</dbReference>
<dbReference type="InterPro" id="IPR003691">
    <property type="entry name" value="FluC"/>
</dbReference>
<dbReference type="NCBIfam" id="TIGR00494">
    <property type="entry name" value="crcB"/>
    <property type="match status" value="1"/>
</dbReference>
<dbReference type="NCBIfam" id="NF010791">
    <property type="entry name" value="PRK14195.1"/>
    <property type="match status" value="1"/>
</dbReference>
<dbReference type="NCBIfam" id="NF010794">
    <property type="entry name" value="PRK14198.1"/>
    <property type="match status" value="1"/>
</dbReference>
<dbReference type="PANTHER" id="PTHR28259">
    <property type="entry name" value="FLUORIDE EXPORT PROTEIN 1-RELATED"/>
    <property type="match status" value="1"/>
</dbReference>
<dbReference type="PANTHER" id="PTHR28259:SF1">
    <property type="entry name" value="FLUORIDE EXPORT PROTEIN 1-RELATED"/>
    <property type="match status" value="1"/>
</dbReference>
<dbReference type="Pfam" id="PF02537">
    <property type="entry name" value="CRCB"/>
    <property type="match status" value="1"/>
</dbReference>
<protein>
    <recommendedName>
        <fullName evidence="1">Fluoride-specific ion channel FluC</fullName>
    </recommendedName>
</protein>